<name>YXZC_BACSU</name>
<reference key="1">
    <citation type="journal article" date="1997" name="Nature">
        <title>The complete genome sequence of the Gram-positive bacterium Bacillus subtilis.</title>
        <authorList>
            <person name="Kunst F."/>
            <person name="Ogasawara N."/>
            <person name="Moszer I."/>
            <person name="Albertini A.M."/>
            <person name="Alloni G."/>
            <person name="Azevedo V."/>
            <person name="Bertero M.G."/>
            <person name="Bessieres P."/>
            <person name="Bolotin A."/>
            <person name="Borchert S."/>
            <person name="Borriss R."/>
            <person name="Boursier L."/>
            <person name="Brans A."/>
            <person name="Braun M."/>
            <person name="Brignell S.C."/>
            <person name="Bron S."/>
            <person name="Brouillet S."/>
            <person name="Bruschi C.V."/>
            <person name="Caldwell B."/>
            <person name="Capuano V."/>
            <person name="Carter N.M."/>
            <person name="Choi S.-K."/>
            <person name="Codani J.-J."/>
            <person name="Connerton I.F."/>
            <person name="Cummings N.J."/>
            <person name="Daniel R.A."/>
            <person name="Denizot F."/>
            <person name="Devine K.M."/>
            <person name="Duesterhoeft A."/>
            <person name="Ehrlich S.D."/>
            <person name="Emmerson P.T."/>
            <person name="Entian K.-D."/>
            <person name="Errington J."/>
            <person name="Fabret C."/>
            <person name="Ferrari E."/>
            <person name="Foulger D."/>
            <person name="Fritz C."/>
            <person name="Fujita M."/>
            <person name="Fujita Y."/>
            <person name="Fuma S."/>
            <person name="Galizzi A."/>
            <person name="Galleron N."/>
            <person name="Ghim S.-Y."/>
            <person name="Glaser P."/>
            <person name="Goffeau A."/>
            <person name="Golightly E.J."/>
            <person name="Grandi G."/>
            <person name="Guiseppi G."/>
            <person name="Guy B.J."/>
            <person name="Haga K."/>
            <person name="Haiech J."/>
            <person name="Harwood C.R."/>
            <person name="Henaut A."/>
            <person name="Hilbert H."/>
            <person name="Holsappel S."/>
            <person name="Hosono S."/>
            <person name="Hullo M.-F."/>
            <person name="Itaya M."/>
            <person name="Jones L.-M."/>
            <person name="Joris B."/>
            <person name="Karamata D."/>
            <person name="Kasahara Y."/>
            <person name="Klaerr-Blanchard M."/>
            <person name="Klein C."/>
            <person name="Kobayashi Y."/>
            <person name="Koetter P."/>
            <person name="Koningstein G."/>
            <person name="Krogh S."/>
            <person name="Kumano M."/>
            <person name="Kurita K."/>
            <person name="Lapidus A."/>
            <person name="Lardinois S."/>
            <person name="Lauber J."/>
            <person name="Lazarevic V."/>
            <person name="Lee S.-M."/>
            <person name="Levine A."/>
            <person name="Liu H."/>
            <person name="Masuda S."/>
            <person name="Mauel C."/>
            <person name="Medigue C."/>
            <person name="Medina N."/>
            <person name="Mellado R.P."/>
            <person name="Mizuno M."/>
            <person name="Moestl D."/>
            <person name="Nakai S."/>
            <person name="Noback M."/>
            <person name="Noone D."/>
            <person name="O'Reilly M."/>
            <person name="Ogawa K."/>
            <person name="Ogiwara A."/>
            <person name="Oudega B."/>
            <person name="Park S.-H."/>
            <person name="Parro V."/>
            <person name="Pohl T.M."/>
            <person name="Portetelle D."/>
            <person name="Porwollik S."/>
            <person name="Prescott A.M."/>
            <person name="Presecan E."/>
            <person name="Pujic P."/>
            <person name="Purnelle B."/>
            <person name="Rapoport G."/>
            <person name="Rey M."/>
            <person name="Reynolds S."/>
            <person name="Rieger M."/>
            <person name="Rivolta C."/>
            <person name="Rocha E."/>
            <person name="Roche B."/>
            <person name="Rose M."/>
            <person name="Sadaie Y."/>
            <person name="Sato T."/>
            <person name="Scanlan E."/>
            <person name="Schleich S."/>
            <person name="Schroeter R."/>
            <person name="Scoffone F."/>
            <person name="Sekiguchi J."/>
            <person name="Sekowska A."/>
            <person name="Seror S.J."/>
            <person name="Serror P."/>
            <person name="Shin B.-S."/>
            <person name="Soldo B."/>
            <person name="Sorokin A."/>
            <person name="Tacconi E."/>
            <person name="Takagi T."/>
            <person name="Takahashi H."/>
            <person name="Takemaru K."/>
            <person name="Takeuchi M."/>
            <person name="Tamakoshi A."/>
            <person name="Tanaka T."/>
            <person name="Terpstra P."/>
            <person name="Tognoni A."/>
            <person name="Tosato V."/>
            <person name="Uchiyama S."/>
            <person name="Vandenbol M."/>
            <person name="Vannier F."/>
            <person name="Vassarotti A."/>
            <person name="Viari A."/>
            <person name="Wambutt R."/>
            <person name="Wedler E."/>
            <person name="Wedler H."/>
            <person name="Weitzenegger T."/>
            <person name="Winters P."/>
            <person name="Wipat A."/>
            <person name="Yamamoto H."/>
            <person name="Yamane K."/>
            <person name="Yasumoto K."/>
            <person name="Yata K."/>
            <person name="Yoshida K."/>
            <person name="Yoshikawa H.-F."/>
            <person name="Zumstein E."/>
            <person name="Yoshikawa H."/>
            <person name="Danchin A."/>
        </authorList>
    </citation>
    <scope>NUCLEOTIDE SEQUENCE [LARGE SCALE GENOMIC DNA]</scope>
    <source>
        <strain>168</strain>
    </source>
</reference>
<gene>
    <name type="primary">yxzC</name>
    <name type="ordered locus">BSU39200</name>
</gene>
<accession>O32286</accession>
<sequence>MVDWKPFGTYLLRKKLQYLNISTVLCILIKNHLVLEYVVIKLSETNLIECINKIKSVLNGQTTREEVSDWAGTYVYADDPEVEDDRVWDMLILLSGIDLKDSSETYLHSTDDLNDWIKQYTE</sequence>
<feature type="chain" id="PRO_0000369132" description="Uncharacterized protein YxzC">
    <location>
        <begin position="1"/>
        <end position="122"/>
    </location>
</feature>
<keyword id="KW-1185">Reference proteome</keyword>
<dbReference type="EMBL" id="AL009126">
    <property type="protein sequence ID" value="CAB15956.1"/>
    <property type="molecule type" value="Genomic_DNA"/>
</dbReference>
<dbReference type="PIR" id="D70083">
    <property type="entry name" value="D70083"/>
</dbReference>
<dbReference type="RefSeq" id="NP_391799.1">
    <property type="nucleotide sequence ID" value="NC_000964.3"/>
</dbReference>
<dbReference type="RefSeq" id="WP_009968394.1">
    <property type="nucleotide sequence ID" value="NZ_OZ025638.1"/>
</dbReference>
<dbReference type="FunCoup" id="O32286">
    <property type="interactions" value="29"/>
</dbReference>
<dbReference type="STRING" id="224308.BSU39200"/>
<dbReference type="PaxDb" id="224308-BSU39200"/>
<dbReference type="EnsemblBacteria" id="CAB15956">
    <property type="protein sequence ID" value="CAB15956"/>
    <property type="gene ID" value="BSU_39200"/>
</dbReference>
<dbReference type="GeneID" id="937967"/>
<dbReference type="KEGG" id="bsu:BSU39200"/>
<dbReference type="PATRIC" id="fig|224308.179.peg.4244"/>
<dbReference type="eggNOG" id="ENOG5033AP7">
    <property type="taxonomic scope" value="Bacteria"/>
</dbReference>
<dbReference type="InParanoid" id="O32286"/>
<dbReference type="OrthoDB" id="2628565at2"/>
<dbReference type="BioCyc" id="BSUB:BSU39200-MONOMER"/>
<dbReference type="Proteomes" id="UP000001570">
    <property type="component" value="Chromosome"/>
</dbReference>
<organism>
    <name type="scientific">Bacillus subtilis (strain 168)</name>
    <dbReference type="NCBI Taxonomy" id="224308"/>
    <lineage>
        <taxon>Bacteria</taxon>
        <taxon>Bacillati</taxon>
        <taxon>Bacillota</taxon>
        <taxon>Bacilli</taxon>
        <taxon>Bacillales</taxon>
        <taxon>Bacillaceae</taxon>
        <taxon>Bacillus</taxon>
    </lineage>
</organism>
<proteinExistence type="predicted"/>
<protein>
    <recommendedName>
        <fullName>Uncharacterized protein YxzC</fullName>
    </recommendedName>
</protein>